<reference key="1">
    <citation type="journal article" date="1994" name="J. Biol. Chem.">
        <title>CGM2, a member of the carcinoembryonic antigen gene family is down-regulated in colorectal carcinomas.</title>
        <authorList>
            <person name="Thompson J."/>
            <person name="Zimmermann W."/>
            <person name="Nollau P."/>
            <person name="Neumaier M."/>
            <person name="Weber-Arden J."/>
            <person name="Schrewe H."/>
            <person name="Craig I."/>
            <person name="Willcocks T."/>
        </authorList>
    </citation>
    <scope>NUCLEOTIDE SEQUENCE [MRNA] (ISOFORM 2A)</scope>
    <scope>VARIANT PHE-120</scope>
</reference>
<reference key="2">
    <citation type="journal article" date="1997" name="Cancer Res.">
        <title>Down-regulation of carcinoembryonic antigen family member 2 expression is an early event in colorectal tumorigenesis.</title>
        <authorList>
            <person name="Thompson J."/>
            <person name="Seitz M."/>
            <person name="Chastre E."/>
            <person name="Ditter M."/>
            <person name="Aldrian C."/>
            <person name="Gespach C."/>
            <person name="Zimmermann W."/>
        </authorList>
    </citation>
    <scope>NUCLEOTIDE SEQUENCE [MRNA] (ISOFORM 2A)</scope>
    <scope>VARIANT PHE-120</scope>
    <source>
        <tissue>Colon mucosa</tissue>
    </source>
</reference>
<reference key="3">
    <citation type="submission" date="1997-06" db="EMBL/GenBank/DDBJ databases">
        <title>Two isoforms of CEA gene family member 2 (CGM2) mRNA are co-expressed in small and large intestine mucosa epithelium and in colorectal tumor cells.</title>
        <authorList>
            <person name="Zhou G.Q."/>
        </authorList>
    </citation>
    <scope>NUCLEOTIDE SEQUENCE [GENOMIC DNA] (ISOFORMS 2A AND 2B)</scope>
    <scope>VARIANT PHE-120</scope>
</reference>
<reference key="4">
    <citation type="journal article" date="2004" name="Nat. Genet.">
        <title>Complete sequencing and characterization of 21,243 full-length human cDNAs.</title>
        <authorList>
            <person name="Ota T."/>
            <person name="Suzuki Y."/>
            <person name="Nishikawa T."/>
            <person name="Otsuki T."/>
            <person name="Sugiyama T."/>
            <person name="Irie R."/>
            <person name="Wakamatsu A."/>
            <person name="Hayashi K."/>
            <person name="Sato H."/>
            <person name="Nagai K."/>
            <person name="Kimura K."/>
            <person name="Makita H."/>
            <person name="Sekine M."/>
            <person name="Obayashi M."/>
            <person name="Nishi T."/>
            <person name="Shibahara T."/>
            <person name="Tanaka T."/>
            <person name="Ishii S."/>
            <person name="Yamamoto J."/>
            <person name="Saito K."/>
            <person name="Kawai Y."/>
            <person name="Isono Y."/>
            <person name="Nakamura Y."/>
            <person name="Nagahari K."/>
            <person name="Murakami K."/>
            <person name="Yasuda T."/>
            <person name="Iwayanagi T."/>
            <person name="Wagatsuma M."/>
            <person name="Shiratori A."/>
            <person name="Sudo H."/>
            <person name="Hosoiri T."/>
            <person name="Kaku Y."/>
            <person name="Kodaira H."/>
            <person name="Kondo H."/>
            <person name="Sugawara M."/>
            <person name="Takahashi M."/>
            <person name="Kanda K."/>
            <person name="Yokoi T."/>
            <person name="Furuya T."/>
            <person name="Kikkawa E."/>
            <person name="Omura Y."/>
            <person name="Abe K."/>
            <person name="Kamihara K."/>
            <person name="Katsuta N."/>
            <person name="Sato K."/>
            <person name="Tanikawa M."/>
            <person name="Yamazaki M."/>
            <person name="Ninomiya K."/>
            <person name="Ishibashi T."/>
            <person name="Yamashita H."/>
            <person name="Murakawa K."/>
            <person name="Fujimori K."/>
            <person name="Tanai H."/>
            <person name="Kimata M."/>
            <person name="Watanabe M."/>
            <person name="Hiraoka S."/>
            <person name="Chiba Y."/>
            <person name="Ishida S."/>
            <person name="Ono Y."/>
            <person name="Takiguchi S."/>
            <person name="Watanabe S."/>
            <person name="Yosida M."/>
            <person name="Hotuta T."/>
            <person name="Kusano J."/>
            <person name="Kanehori K."/>
            <person name="Takahashi-Fujii A."/>
            <person name="Hara H."/>
            <person name="Tanase T.-O."/>
            <person name="Nomura Y."/>
            <person name="Togiya S."/>
            <person name="Komai F."/>
            <person name="Hara R."/>
            <person name="Takeuchi K."/>
            <person name="Arita M."/>
            <person name="Imose N."/>
            <person name="Musashino K."/>
            <person name="Yuuki H."/>
            <person name="Oshima A."/>
            <person name="Sasaki N."/>
            <person name="Aotsuka S."/>
            <person name="Yoshikawa Y."/>
            <person name="Matsunawa H."/>
            <person name="Ichihara T."/>
            <person name="Shiohata N."/>
            <person name="Sano S."/>
            <person name="Moriya S."/>
            <person name="Momiyama H."/>
            <person name="Satoh N."/>
            <person name="Takami S."/>
            <person name="Terashima Y."/>
            <person name="Suzuki O."/>
            <person name="Nakagawa S."/>
            <person name="Senoh A."/>
            <person name="Mizoguchi H."/>
            <person name="Goto Y."/>
            <person name="Shimizu F."/>
            <person name="Wakebe H."/>
            <person name="Hishigaki H."/>
            <person name="Watanabe T."/>
            <person name="Sugiyama A."/>
            <person name="Takemoto M."/>
            <person name="Kawakami B."/>
            <person name="Yamazaki M."/>
            <person name="Watanabe K."/>
            <person name="Kumagai A."/>
            <person name="Itakura S."/>
            <person name="Fukuzumi Y."/>
            <person name="Fujimori Y."/>
            <person name="Komiyama M."/>
            <person name="Tashiro H."/>
            <person name="Tanigami A."/>
            <person name="Fujiwara T."/>
            <person name="Ono T."/>
            <person name="Yamada K."/>
            <person name="Fujii Y."/>
            <person name="Ozaki K."/>
            <person name="Hirao M."/>
            <person name="Ohmori Y."/>
            <person name="Kawabata A."/>
            <person name="Hikiji T."/>
            <person name="Kobatake N."/>
            <person name="Inagaki H."/>
            <person name="Ikema Y."/>
            <person name="Okamoto S."/>
            <person name="Okitani R."/>
            <person name="Kawakami T."/>
            <person name="Noguchi S."/>
            <person name="Itoh T."/>
            <person name="Shigeta K."/>
            <person name="Senba T."/>
            <person name="Matsumura K."/>
            <person name="Nakajima Y."/>
            <person name="Mizuno T."/>
            <person name="Morinaga M."/>
            <person name="Sasaki M."/>
            <person name="Togashi T."/>
            <person name="Oyama M."/>
            <person name="Hata H."/>
            <person name="Watanabe M."/>
            <person name="Komatsu T."/>
            <person name="Mizushima-Sugano J."/>
            <person name="Satoh T."/>
            <person name="Shirai Y."/>
            <person name="Takahashi Y."/>
            <person name="Nakagawa K."/>
            <person name="Okumura K."/>
            <person name="Nagase T."/>
            <person name="Nomura N."/>
            <person name="Kikuchi H."/>
            <person name="Masuho Y."/>
            <person name="Yamashita R."/>
            <person name="Nakai K."/>
            <person name="Yada T."/>
            <person name="Nakamura Y."/>
            <person name="Ohara O."/>
            <person name="Isogai T."/>
            <person name="Sugano S."/>
        </authorList>
    </citation>
    <scope>NUCLEOTIDE SEQUENCE [LARGE SCALE MRNA] (ISOFORM 2A)</scope>
    <source>
        <tissue>Colon</tissue>
        <tissue>Esophagus</tissue>
    </source>
</reference>
<reference key="5">
    <citation type="journal article" date="2004" name="Nature">
        <title>The DNA sequence and biology of human chromosome 19.</title>
        <authorList>
            <person name="Grimwood J."/>
            <person name="Gordon L.A."/>
            <person name="Olsen A.S."/>
            <person name="Terry A."/>
            <person name="Schmutz J."/>
            <person name="Lamerdin J.E."/>
            <person name="Hellsten U."/>
            <person name="Goodstein D."/>
            <person name="Couronne O."/>
            <person name="Tran-Gyamfi M."/>
            <person name="Aerts A."/>
            <person name="Altherr M."/>
            <person name="Ashworth L."/>
            <person name="Bajorek E."/>
            <person name="Black S."/>
            <person name="Branscomb E."/>
            <person name="Caenepeel S."/>
            <person name="Carrano A.V."/>
            <person name="Caoile C."/>
            <person name="Chan Y.M."/>
            <person name="Christensen M."/>
            <person name="Cleland C.A."/>
            <person name="Copeland A."/>
            <person name="Dalin E."/>
            <person name="Dehal P."/>
            <person name="Denys M."/>
            <person name="Detter J.C."/>
            <person name="Escobar J."/>
            <person name="Flowers D."/>
            <person name="Fotopulos D."/>
            <person name="Garcia C."/>
            <person name="Georgescu A.M."/>
            <person name="Glavina T."/>
            <person name="Gomez M."/>
            <person name="Gonzales E."/>
            <person name="Groza M."/>
            <person name="Hammon N."/>
            <person name="Hawkins T."/>
            <person name="Haydu L."/>
            <person name="Ho I."/>
            <person name="Huang W."/>
            <person name="Israni S."/>
            <person name="Jett J."/>
            <person name="Kadner K."/>
            <person name="Kimball H."/>
            <person name="Kobayashi A."/>
            <person name="Larionov V."/>
            <person name="Leem S.-H."/>
            <person name="Lopez F."/>
            <person name="Lou Y."/>
            <person name="Lowry S."/>
            <person name="Malfatti S."/>
            <person name="Martinez D."/>
            <person name="McCready P.M."/>
            <person name="Medina C."/>
            <person name="Morgan J."/>
            <person name="Nelson K."/>
            <person name="Nolan M."/>
            <person name="Ovcharenko I."/>
            <person name="Pitluck S."/>
            <person name="Pollard M."/>
            <person name="Popkie A.P."/>
            <person name="Predki P."/>
            <person name="Quan G."/>
            <person name="Ramirez L."/>
            <person name="Rash S."/>
            <person name="Retterer J."/>
            <person name="Rodriguez A."/>
            <person name="Rogers S."/>
            <person name="Salamov A."/>
            <person name="Salazar A."/>
            <person name="She X."/>
            <person name="Smith D."/>
            <person name="Slezak T."/>
            <person name="Solovyev V."/>
            <person name="Thayer N."/>
            <person name="Tice H."/>
            <person name="Tsai M."/>
            <person name="Ustaszewska A."/>
            <person name="Vo N."/>
            <person name="Wagner M."/>
            <person name="Wheeler J."/>
            <person name="Wu K."/>
            <person name="Xie G."/>
            <person name="Yang J."/>
            <person name="Dubchak I."/>
            <person name="Furey T.S."/>
            <person name="DeJong P."/>
            <person name="Dickson M."/>
            <person name="Gordon D."/>
            <person name="Eichler E.E."/>
            <person name="Pennacchio L.A."/>
            <person name="Richardson P."/>
            <person name="Stubbs L."/>
            <person name="Rokhsar D.S."/>
            <person name="Myers R.M."/>
            <person name="Rubin E.M."/>
            <person name="Lucas S.M."/>
        </authorList>
    </citation>
    <scope>NUCLEOTIDE SEQUENCE [LARGE SCALE GENOMIC DNA]</scope>
    <scope>VARIANT PHE-120</scope>
</reference>
<reference key="6">
    <citation type="journal article" date="2004" name="Genome Res.">
        <title>The status, quality, and expansion of the NIH full-length cDNA project: the Mammalian Gene Collection (MGC).</title>
        <authorList>
            <consortium name="The MGC Project Team"/>
        </authorList>
    </citation>
    <scope>NUCLEOTIDE SEQUENCE [LARGE SCALE MRNA] (ISOFORM 2A)</scope>
</reference>
<reference key="7">
    <citation type="journal article" date="1989" name="Biochem. Biophys. Res. Commun.">
        <title>Analysis of the size of the carcinoembryonic antigen (CEA) gene family: isolation and sequencing of N-terminal domain exons.</title>
        <authorList>
            <person name="Thompson J.A."/>
            <person name="Mauch E.-M."/>
            <person name="Chen F.-S."/>
            <person name="Hinoda Y."/>
            <person name="Schrewe H."/>
            <person name="Berling B."/>
            <person name="Barnert S."/>
            <person name="von Kleist S."/>
            <person name="Shively J.E."/>
            <person name="Zimmermann W."/>
        </authorList>
    </citation>
    <scope>NUCLEOTIDE SEQUENCE [GENOMIC DNA] OF 23-142</scope>
    <source>
        <tissue>Liver</tissue>
    </source>
</reference>
<reference key="8">
    <citation type="journal article" date="1992" name="Genomics">
        <title>Identification of three new genes and estimation of the size of the carcinoembryonic antigen family.</title>
        <authorList>
            <person name="Khan W.N."/>
            <person name="Fraengsmyr L."/>
            <person name="Teglund S."/>
            <person name="Israelsson A."/>
            <person name="Bremer K."/>
            <person name="Hammarstroem S."/>
        </authorList>
    </citation>
    <scope>NUCLEOTIDE SEQUENCE OF 35-142</scope>
    <scope>VARIANT PHE-120</scope>
</reference>
<reference key="9">
    <citation type="journal article" date="2004" name="Protein Sci.">
        <title>Signal peptide prediction based on analysis of experimentally verified cleavage sites.</title>
        <authorList>
            <person name="Zhang Z."/>
            <person name="Henzel W.J."/>
        </authorList>
    </citation>
    <scope>PROTEIN SEQUENCE OF 36-50</scope>
</reference>
<reference key="10">
    <citation type="journal article" date="1999" name="Tumor Biol.">
        <title>Four carcinoembryonic antigen subfamily members, CEA, NCA, BGP and CGM2, selectively expressed in the normal human colonic epithelium, are integral components of the fuzzy coat.</title>
        <authorList>
            <person name="Fraengsmyr L."/>
            <person name="Baranov V."/>
            <person name="Hammarstroem S."/>
        </authorList>
    </citation>
    <scope>SUBCELLULAR LOCATION</scope>
    <scope>TISSUE SPECIFICITY</scope>
</reference>
<reference key="11">
    <citation type="journal article" date="2015" name="Acta Crystallogr. F">
        <title>Structure of the N-terminal dimerization domain of CEACAM7.</title>
        <authorList>
            <person name="Bonsor D.A."/>
            <person name="Beckett D."/>
            <person name="Sundberg E.J."/>
        </authorList>
    </citation>
    <scope>X-RAY CRYSTALLOGRAPHY (1.47 ANGSTROMS) OF 34-142</scope>
    <scope>SUBUNIT</scope>
</reference>
<sequence length="265" mass="29345">MGSPSACPYRVCIPWQGLLLTASLLTFWNLPNSAQTNIDVVPFNVAEGKEVLLVVHNESQNLYGYNWYKGERVHANYRIIGYVKNISQENAPGPAHNGRETIYPNGTLLIQNVTHNDAGIYTLHVIKENLVNEEVTRQFYVFSEPPKPSITSNNFNPVENKDIVVLTCQPETQNTTYLWWVNNQSLLVSPRLLLSTDNRTLVLLSATKNDIGPYECEIQNPVGASRSDPVTLNVRYESVQASSPDLSAGTAVSIMIGVLAGMALI</sequence>
<organism>
    <name type="scientific">Homo sapiens</name>
    <name type="common">Human</name>
    <dbReference type="NCBI Taxonomy" id="9606"/>
    <lineage>
        <taxon>Eukaryota</taxon>
        <taxon>Metazoa</taxon>
        <taxon>Chordata</taxon>
        <taxon>Craniata</taxon>
        <taxon>Vertebrata</taxon>
        <taxon>Euteleostomi</taxon>
        <taxon>Mammalia</taxon>
        <taxon>Eutheria</taxon>
        <taxon>Euarchontoglires</taxon>
        <taxon>Primates</taxon>
        <taxon>Haplorrhini</taxon>
        <taxon>Catarrhini</taxon>
        <taxon>Hominidae</taxon>
        <taxon>Homo</taxon>
    </lineage>
</organism>
<dbReference type="EMBL" id="L31792">
    <property type="protein sequence ID" value="AAA66186.1"/>
    <property type="molecule type" value="mRNA"/>
</dbReference>
<dbReference type="EMBL" id="X98311">
    <property type="protein sequence ID" value="CAA66955.1"/>
    <property type="molecule type" value="mRNA"/>
</dbReference>
<dbReference type="EMBL" id="AF006622">
    <property type="protein sequence ID" value="AAB62924.1"/>
    <property type="molecule type" value="mRNA"/>
</dbReference>
<dbReference type="EMBL" id="AF006623">
    <property type="protein sequence ID" value="AAB62925.1"/>
    <property type="molecule type" value="mRNA"/>
</dbReference>
<dbReference type="EMBL" id="AK292213">
    <property type="protein sequence ID" value="BAF84902.1"/>
    <property type="molecule type" value="mRNA"/>
</dbReference>
<dbReference type="EMBL" id="AK313108">
    <property type="protein sequence ID" value="BAG35930.1"/>
    <property type="molecule type" value="mRNA"/>
</dbReference>
<dbReference type="EMBL" id="AC005797">
    <property type="protein sequence ID" value="AAC62825.1"/>
    <property type="molecule type" value="Genomic_DNA"/>
</dbReference>
<dbReference type="EMBL" id="AC005797">
    <property type="protein sequence ID" value="AAC62826.1"/>
    <property type="molecule type" value="Genomic_DNA"/>
</dbReference>
<dbReference type="EMBL" id="BC121132">
    <property type="protein sequence ID" value="AAI21133.1"/>
    <property type="molecule type" value="mRNA"/>
</dbReference>
<dbReference type="EMBL" id="M22434">
    <property type="protein sequence ID" value="AAA51966.1"/>
    <property type="molecule type" value="Genomic_DNA"/>
</dbReference>
<dbReference type="CCDS" id="CCDS12583.1">
    <molecule id="Q14002-1"/>
</dbReference>
<dbReference type="PIR" id="A55811">
    <property type="entry name" value="A55811"/>
</dbReference>
<dbReference type="RefSeq" id="NP_001278414.1">
    <molecule id="Q14002-1"/>
    <property type="nucleotide sequence ID" value="NM_001291485.2"/>
</dbReference>
<dbReference type="RefSeq" id="NP_008821.2">
    <molecule id="Q14002-1"/>
    <property type="nucleotide sequence ID" value="NM_006890.5"/>
</dbReference>
<dbReference type="PDB" id="4Y89">
    <property type="method" value="X-ray"/>
    <property type="resolution" value="1.47 A"/>
    <property type="chains" value="A/B/C/D=34-142"/>
</dbReference>
<dbReference type="PDBsum" id="4Y89"/>
<dbReference type="SMR" id="Q14002"/>
<dbReference type="BioGRID" id="107513">
    <property type="interactions" value="8"/>
</dbReference>
<dbReference type="FunCoup" id="Q14002">
    <property type="interactions" value="53"/>
</dbReference>
<dbReference type="IntAct" id="Q14002">
    <property type="interactions" value="4"/>
</dbReference>
<dbReference type="STRING" id="9606.ENSP00000006724"/>
<dbReference type="GlyCosmos" id="Q14002">
    <property type="glycosylation" value="7 sites, No reported glycans"/>
</dbReference>
<dbReference type="GlyGen" id="Q14002">
    <property type="glycosylation" value="7 sites"/>
</dbReference>
<dbReference type="iPTMnet" id="Q14002"/>
<dbReference type="PhosphoSitePlus" id="Q14002"/>
<dbReference type="BioMuta" id="CEACAM7"/>
<dbReference type="DMDM" id="5921734"/>
<dbReference type="jPOST" id="Q14002"/>
<dbReference type="MassIVE" id="Q14002"/>
<dbReference type="PaxDb" id="9606-ENSP00000006724"/>
<dbReference type="PeptideAtlas" id="Q14002"/>
<dbReference type="ProteomicsDB" id="59783">
    <molecule id="Q14002-1"/>
</dbReference>
<dbReference type="ProteomicsDB" id="59784">
    <molecule id="Q14002-2"/>
</dbReference>
<dbReference type="Antibodypedia" id="30805">
    <property type="antibodies" value="275 antibodies from 26 providers"/>
</dbReference>
<dbReference type="DNASU" id="1087"/>
<dbReference type="Ensembl" id="ENST00000006724.7">
    <molecule id="Q14002-1"/>
    <property type="protein sequence ID" value="ENSP00000006724.3"/>
    <property type="gene ID" value="ENSG00000007306.15"/>
</dbReference>
<dbReference type="Ensembl" id="ENST00000401731.6">
    <molecule id="Q14002-1"/>
    <property type="protein sequence ID" value="ENSP00000385932.1"/>
    <property type="gene ID" value="ENSG00000007306.15"/>
</dbReference>
<dbReference type="Ensembl" id="ENST00000602225.1">
    <molecule id="Q14002-2"/>
    <property type="protein sequence ID" value="ENSP00000469597.1"/>
    <property type="gene ID" value="ENSG00000007306.15"/>
</dbReference>
<dbReference type="GeneID" id="1087"/>
<dbReference type="KEGG" id="hsa:1087"/>
<dbReference type="MANE-Select" id="ENST00000401731.6">
    <property type="protein sequence ID" value="ENSP00000385932.1"/>
    <property type="RefSeq nucleotide sequence ID" value="NM_001291485.2"/>
    <property type="RefSeq protein sequence ID" value="NP_001278414.1"/>
</dbReference>
<dbReference type="UCSC" id="uc002ori.2">
    <molecule id="Q14002-1"/>
    <property type="organism name" value="human"/>
</dbReference>
<dbReference type="AGR" id="HGNC:1819"/>
<dbReference type="CTD" id="1087"/>
<dbReference type="DisGeNET" id="1087"/>
<dbReference type="GeneCards" id="CEACAM7"/>
<dbReference type="HGNC" id="HGNC:1819">
    <property type="gene designation" value="CEACAM7"/>
</dbReference>
<dbReference type="HPA" id="ENSG00000007306">
    <property type="expression patterns" value="Tissue enriched (intestine)"/>
</dbReference>
<dbReference type="MIM" id="619160">
    <property type="type" value="gene"/>
</dbReference>
<dbReference type="neXtProt" id="NX_Q14002"/>
<dbReference type="OpenTargets" id="ENSG00000007306"/>
<dbReference type="PharmGKB" id="PA26363"/>
<dbReference type="VEuPathDB" id="HostDB:ENSG00000007306"/>
<dbReference type="eggNOG" id="ENOG502RXPD">
    <property type="taxonomic scope" value="Eukaryota"/>
</dbReference>
<dbReference type="GeneTree" id="ENSGT01100000263479"/>
<dbReference type="HOGENOM" id="CLU_024555_4_0_1"/>
<dbReference type="InParanoid" id="Q14002"/>
<dbReference type="OMA" id="VRHESVQ"/>
<dbReference type="OrthoDB" id="6353782at2759"/>
<dbReference type="PAN-GO" id="Q14002">
    <property type="GO annotations" value="0 GO annotations based on evolutionary models"/>
</dbReference>
<dbReference type="PhylomeDB" id="Q14002"/>
<dbReference type="TreeFam" id="TF336859"/>
<dbReference type="PathwayCommons" id="Q14002"/>
<dbReference type="Reactome" id="R-HSA-163125">
    <property type="pathway name" value="Post-translational modification: synthesis of GPI-anchored proteins"/>
</dbReference>
<dbReference type="SignaLink" id="Q14002"/>
<dbReference type="BioGRID-ORCS" id="1087">
    <property type="hits" value="11 hits in 1137 CRISPR screens"/>
</dbReference>
<dbReference type="ChiTaRS" id="CEACAM7">
    <property type="organism name" value="human"/>
</dbReference>
<dbReference type="EvolutionaryTrace" id="Q14002"/>
<dbReference type="GeneWiki" id="CEACAM7"/>
<dbReference type="GenomeRNAi" id="1087"/>
<dbReference type="Pharos" id="Q14002">
    <property type="development level" value="Tbio"/>
</dbReference>
<dbReference type="PRO" id="PR:Q14002"/>
<dbReference type="Proteomes" id="UP000005640">
    <property type="component" value="Chromosome 19"/>
</dbReference>
<dbReference type="RNAct" id="Q14002">
    <property type="molecule type" value="protein"/>
</dbReference>
<dbReference type="Bgee" id="ENSG00000007306">
    <property type="expression patterns" value="Expressed in mucosa of transverse colon and 108 other cell types or tissues"/>
</dbReference>
<dbReference type="ExpressionAtlas" id="Q14002">
    <property type="expression patterns" value="baseline and differential"/>
</dbReference>
<dbReference type="GO" id="GO:0016324">
    <property type="term" value="C:apical plasma membrane"/>
    <property type="evidence" value="ECO:0000314"/>
    <property type="project" value="UniProtKB"/>
</dbReference>
<dbReference type="GO" id="GO:0009986">
    <property type="term" value="C:cell surface"/>
    <property type="evidence" value="ECO:0000318"/>
    <property type="project" value="GO_Central"/>
</dbReference>
<dbReference type="GO" id="GO:0005829">
    <property type="term" value="C:cytosol"/>
    <property type="evidence" value="ECO:0000314"/>
    <property type="project" value="HPA"/>
</dbReference>
<dbReference type="GO" id="GO:0005576">
    <property type="term" value="C:extracellular region"/>
    <property type="evidence" value="ECO:0000304"/>
    <property type="project" value="Reactome"/>
</dbReference>
<dbReference type="GO" id="GO:0005886">
    <property type="term" value="C:plasma membrane"/>
    <property type="evidence" value="ECO:0000314"/>
    <property type="project" value="HPA"/>
</dbReference>
<dbReference type="GO" id="GO:0098552">
    <property type="term" value="C:side of membrane"/>
    <property type="evidence" value="ECO:0007669"/>
    <property type="project" value="UniProtKB-KW"/>
</dbReference>
<dbReference type="GO" id="GO:1990782">
    <property type="term" value="F:protein tyrosine kinase binding"/>
    <property type="evidence" value="ECO:0000318"/>
    <property type="project" value="GO_Central"/>
</dbReference>
<dbReference type="GO" id="GO:0002682">
    <property type="term" value="P:regulation of immune system process"/>
    <property type="evidence" value="ECO:0000318"/>
    <property type="project" value="GO_Central"/>
</dbReference>
<dbReference type="GO" id="GO:0007165">
    <property type="term" value="P:signal transduction"/>
    <property type="evidence" value="ECO:0000318"/>
    <property type="project" value="GO_Central"/>
</dbReference>
<dbReference type="CDD" id="cd05740">
    <property type="entry name" value="IgI_hCEACAM_2_4_6_like"/>
    <property type="match status" value="1"/>
</dbReference>
<dbReference type="CDD" id="cd05774">
    <property type="entry name" value="IgV_CEACAM_D1"/>
    <property type="match status" value="1"/>
</dbReference>
<dbReference type="FunFam" id="2.60.40.10:FF:000340">
    <property type="entry name" value="Carcinoembryonic antigen-related cell adhesion molecule 1"/>
    <property type="match status" value="1"/>
</dbReference>
<dbReference type="FunFam" id="2.60.40.10:FF:000244">
    <property type="entry name" value="carcinoembryonic antigen-related cell adhesion molecule 16"/>
    <property type="match status" value="1"/>
</dbReference>
<dbReference type="Gene3D" id="2.60.40.10">
    <property type="entry name" value="Immunoglobulins"/>
    <property type="match status" value="2"/>
</dbReference>
<dbReference type="InterPro" id="IPR050831">
    <property type="entry name" value="CEA_cell_adhesion"/>
</dbReference>
<dbReference type="InterPro" id="IPR007110">
    <property type="entry name" value="Ig-like_dom"/>
</dbReference>
<dbReference type="InterPro" id="IPR036179">
    <property type="entry name" value="Ig-like_dom_sf"/>
</dbReference>
<dbReference type="InterPro" id="IPR013783">
    <property type="entry name" value="Ig-like_fold"/>
</dbReference>
<dbReference type="InterPro" id="IPR003599">
    <property type="entry name" value="Ig_sub"/>
</dbReference>
<dbReference type="InterPro" id="IPR013106">
    <property type="entry name" value="Ig_V-set"/>
</dbReference>
<dbReference type="PANTHER" id="PTHR44427">
    <property type="entry name" value="CARCINOEMBRYONIC ANTIGEN-RELATED CELL ADHESION MOLECULE 19"/>
    <property type="match status" value="1"/>
</dbReference>
<dbReference type="PANTHER" id="PTHR44427:SF25">
    <property type="entry name" value="CARCINOEMBRYONIC ANTIGEN-RELATED CELL ADHESION MOLECULE 7"/>
    <property type="match status" value="1"/>
</dbReference>
<dbReference type="Pfam" id="PF13927">
    <property type="entry name" value="Ig_3"/>
    <property type="match status" value="1"/>
</dbReference>
<dbReference type="Pfam" id="PF07686">
    <property type="entry name" value="V-set"/>
    <property type="match status" value="1"/>
</dbReference>
<dbReference type="SMART" id="SM00409">
    <property type="entry name" value="IG"/>
    <property type="match status" value="2"/>
</dbReference>
<dbReference type="SUPFAM" id="SSF48726">
    <property type="entry name" value="Immunoglobulin"/>
    <property type="match status" value="2"/>
</dbReference>
<dbReference type="PROSITE" id="PS50835">
    <property type="entry name" value="IG_LIKE"/>
    <property type="match status" value="1"/>
</dbReference>
<name>CEAM7_HUMAN</name>
<comment type="subunit">
    <text evidence="8">Homodimer.</text>
</comment>
<comment type="subcellular location">
    <subcellularLocation>
        <location evidence="13">Cell membrane</location>
        <topology evidence="13">Lipid-anchor</topology>
        <topology evidence="13">GPI-anchor</topology>
    </subcellularLocation>
    <subcellularLocation>
        <location evidence="4">Apical cell membrane</location>
    </subcellularLocation>
    <text evidence="4">Localized to the apical glycocalyx surface.</text>
</comment>
<comment type="alternative products">
    <event type="alternative splicing"/>
    <isoform>
        <id>Q14002-1</id>
        <name>2a</name>
        <sequence type="displayed"/>
    </isoform>
    <isoform>
        <id>Q14002-2</id>
        <name>2b</name>
        <sequence type="described" ref="VSP_002488"/>
    </isoform>
</comment>
<comment type="tissue specificity">
    <text evidence="4">Expressed in columnar epithelial cells of the colon (at protein level) (PubMed:10436421). Strongly down-regulated in colonic adenocarcinomas.</text>
</comment>
<comment type="similarity">
    <text evidence="13">Belongs to the immunoglobulin superfamily. CEA family.</text>
</comment>
<feature type="signal peptide" evidence="7">
    <location>
        <begin position="1"/>
        <end position="35"/>
    </location>
</feature>
<feature type="chain" id="PRO_0000014570" description="Cell adhesion molecule CEACAM7">
    <location>
        <begin position="36"/>
        <end position="242"/>
    </location>
</feature>
<feature type="propeptide" id="PRO_0000014571" description="Removed in mature form" evidence="2">
    <location>
        <begin position="243"/>
        <end position="265"/>
    </location>
</feature>
<feature type="domain" description="Ig-like V-type" evidence="1">
    <location>
        <begin position="36"/>
        <end position="142"/>
    </location>
</feature>
<feature type="domain" description="Ig-like C2-type" evidence="3">
    <location>
        <begin position="146"/>
        <end position="233"/>
    </location>
</feature>
<feature type="lipid moiety-binding region" description="GPI-anchor amidated serine" evidence="2">
    <location>
        <position position="242"/>
    </location>
</feature>
<feature type="glycosylation site" description="N-linked (GlcNAc...) asparagine" evidence="2">
    <location>
        <position position="57"/>
    </location>
</feature>
<feature type="glycosylation site" description="N-linked (GlcNAc...) asparagine" evidence="2">
    <location>
        <position position="85"/>
    </location>
</feature>
<feature type="glycosylation site" description="N-linked (GlcNAc...) asparagine" evidence="2">
    <location>
        <position position="105"/>
    </location>
</feature>
<feature type="glycosylation site" description="N-linked (GlcNAc...) asparagine" evidence="2">
    <location>
        <position position="112"/>
    </location>
</feature>
<feature type="glycosylation site" description="N-linked (GlcNAc...) asparagine" evidence="2">
    <location>
        <position position="174"/>
    </location>
</feature>
<feature type="glycosylation site" description="N-linked (GlcNAc...) asparagine" evidence="2">
    <location>
        <position position="183"/>
    </location>
</feature>
<feature type="glycosylation site" description="N-linked (GlcNAc...) asparagine" evidence="2">
    <location>
        <position position="198"/>
    </location>
</feature>
<feature type="disulfide bond" evidence="3">
    <location>
        <begin position="168"/>
        <end position="216"/>
    </location>
</feature>
<feature type="splice variant" id="VSP_002488" description="In isoform 2b." evidence="13">
    <location>
        <begin position="143"/>
        <end position="235"/>
    </location>
</feature>
<feature type="sequence variant" id="VAR_024494" description="In dbSNP:rs8102488." evidence="5 6 9 10 11">
    <original>I</original>
    <variation>F</variation>
    <location>
        <position position="120"/>
    </location>
</feature>
<feature type="sequence variant" id="VAR_059384" description="In dbSNP:rs16975478.">
    <original>Y</original>
    <variation>H</variation>
    <location>
        <position position="236"/>
    </location>
</feature>
<feature type="sequence variant" id="VAR_049848" description="In dbSNP:rs7259532.">
    <original>A</original>
    <variation>V</variation>
    <location>
        <position position="263"/>
    </location>
</feature>
<feature type="sequence conflict" description="In Ref. 3; AAB62924/AAB62925." evidence="13" ref="3">
    <original>V</original>
    <variation>G</variation>
    <location>
        <position position="40"/>
    </location>
</feature>
<feature type="sequence conflict" description="In Ref. 3; AAB62924/AAB62925." evidence="13" ref="3">
    <original>E</original>
    <variation>Q</variation>
    <location>
        <position position="71"/>
    </location>
</feature>
<feature type="sequence conflict" description="In Ref. 3; AAB62924." evidence="13" ref="3">
    <original>R</original>
    <variation>C</variation>
    <location>
        <position position="235"/>
    </location>
</feature>
<feature type="strand" evidence="15">
    <location>
        <begin position="37"/>
        <end position="46"/>
    </location>
</feature>
<feature type="strand" evidence="15">
    <location>
        <begin position="51"/>
        <end position="56"/>
    </location>
</feature>
<feature type="strand" evidence="15">
    <location>
        <begin position="62"/>
        <end position="71"/>
    </location>
</feature>
<feature type="helix" evidence="15">
    <location>
        <begin position="75"/>
        <end position="77"/>
    </location>
</feature>
<feature type="strand" evidence="15">
    <location>
        <begin position="78"/>
        <end position="83"/>
    </location>
</feature>
<feature type="turn" evidence="15">
    <location>
        <begin position="84"/>
        <end position="87"/>
    </location>
</feature>
<feature type="strand" evidence="15">
    <location>
        <begin position="100"/>
        <end position="102"/>
    </location>
</feature>
<feature type="strand" evidence="15">
    <location>
        <begin position="108"/>
        <end position="110"/>
    </location>
</feature>
<feature type="helix" evidence="15">
    <location>
        <begin position="115"/>
        <end position="117"/>
    </location>
</feature>
<feature type="strand" evidence="15">
    <location>
        <begin position="119"/>
        <end position="127"/>
    </location>
</feature>
<feature type="strand" evidence="15">
    <location>
        <begin position="133"/>
        <end position="142"/>
    </location>
</feature>
<keyword id="KW-0002">3D-structure</keyword>
<keyword id="KW-0025">Alternative splicing</keyword>
<keyword id="KW-1003">Cell membrane</keyword>
<keyword id="KW-0903">Direct protein sequencing</keyword>
<keyword id="KW-1015">Disulfide bond</keyword>
<keyword id="KW-0325">Glycoprotein</keyword>
<keyword id="KW-0336">GPI-anchor</keyword>
<keyword id="KW-0393">Immunoglobulin domain</keyword>
<keyword id="KW-0449">Lipoprotein</keyword>
<keyword id="KW-0472">Membrane</keyword>
<keyword id="KW-1267">Proteomics identification</keyword>
<keyword id="KW-1185">Reference proteome</keyword>
<keyword id="KW-0677">Repeat</keyword>
<keyword id="KW-0732">Signal</keyword>
<protein>
    <recommendedName>
        <fullName evidence="13">Cell adhesion molecule CEACAM7</fullName>
    </recommendedName>
    <alternativeName>
        <fullName evidence="12">Carcinoembryonic antigen CGM2</fullName>
    </alternativeName>
    <alternativeName>
        <fullName evidence="13">Carcinoembryonic antigen-related cell adhesion molecule 7</fullName>
        <shortName evidence="14">CEA cell adhesion molecule 7</shortName>
    </alternativeName>
</protein>
<evidence type="ECO:0000250" key="1">
    <source>
        <dbReference type="UniProtKB" id="P31997"/>
    </source>
</evidence>
<evidence type="ECO:0000255" key="2"/>
<evidence type="ECO:0000255" key="3">
    <source>
        <dbReference type="PROSITE-ProRule" id="PRU00114"/>
    </source>
</evidence>
<evidence type="ECO:0000269" key="4">
    <source>
    </source>
</evidence>
<evidence type="ECO:0000269" key="5">
    <source>
    </source>
</evidence>
<evidence type="ECO:0000269" key="6">
    <source>
    </source>
</evidence>
<evidence type="ECO:0000269" key="7">
    <source>
    </source>
</evidence>
<evidence type="ECO:0000269" key="8">
    <source>
    </source>
</evidence>
<evidence type="ECO:0000269" key="9">
    <source>
    </source>
</evidence>
<evidence type="ECO:0000269" key="10">
    <source>
    </source>
</evidence>
<evidence type="ECO:0000269" key="11">
    <source ref="3"/>
</evidence>
<evidence type="ECO:0000303" key="12">
    <source>
    </source>
</evidence>
<evidence type="ECO:0000305" key="13"/>
<evidence type="ECO:0000312" key="14">
    <source>
        <dbReference type="HGNC" id="HGNC:1819"/>
    </source>
</evidence>
<evidence type="ECO:0007829" key="15">
    <source>
        <dbReference type="PDB" id="4Y89"/>
    </source>
</evidence>
<proteinExistence type="evidence at protein level"/>
<accession>Q14002</accession>
<accession>A8K848</accession>
<accession>O15148</accession>
<accession>O15149</accession>
<accession>Q0VAC1</accession>
<accession>Q13983</accession>
<accession>Q9UPJ2</accession>
<gene>
    <name evidence="14" type="primary">CEACAM7</name>
    <name evidence="12" type="synonym">CGM2</name>
</gene>